<reference key="1">
    <citation type="journal article" date="2003" name="Proc. Natl. Acad. Sci. U.S.A.">
        <title>Complete genome sequence of Lactobacillus plantarum WCFS1.</title>
        <authorList>
            <person name="Kleerebezem M."/>
            <person name="Boekhorst J."/>
            <person name="van Kranenburg R."/>
            <person name="Molenaar D."/>
            <person name="Kuipers O.P."/>
            <person name="Leer R."/>
            <person name="Tarchini R."/>
            <person name="Peters S.A."/>
            <person name="Sandbrink H.M."/>
            <person name="Fiers M.W.E.J."/>
            <person name="Stiekema W."/>
            <person name="Klein Lankhorst R.M."/>
            <person name="Bron P.A."/>
            <person name="Hoffer S.M."/>
            <person name="Nierop Groot M.N."/>
            <person name="Kerkhoven R."/>
            <person name="De Vries M."/>
            <person name="Ursing B."/>
            <person name="De Vos W.M."/>
            <person name="Siezen R.J."/>
        </authorList>
    </citation>
    <scope>NUCLEOTIDE SEQUENCE [LARGE SCALE GENOMIC DNA]</scope>
    <source>
        <strain>ATCC BAA-793 / NCIMB 8826 / WCFS1</strain>
    </source>
</reference>
<reference key="2">
    <citation type="journal article" date="2012" name="J. Bacteriol.">
        <title>Complete resequencing and reannotation of the Lactobacillus plantarum WCFS1 genome.</title>
        <authorList>
            <person name="Siezen R.J."/>
            <person name="Francke C."/>
            <person name="Renckens B."/>
            <person name="Boekhorst J."/>
            <person name="Wels M."/>
            <person name="Kleerebezem M."/>
            <person name="van Hijum S.A."/>
        </authorList>
    </citation>
    <scope>NUCLEOTIDE SEQUENCE [LARGE SCALE GENOMIC DNA]</scope>
    <scope>GENOME REANNOTATION</scope>
    <source>
        <strain>ATCC BAA-793 / NCIMB 8826 / WCFS1</strain>
    </source>
</reference>
<accession>Q88V67</accession>
<accession>F9UQE0</accession>
<dbReference type="EMBL" id="AL935263">
    <property type="protein sequence ID" value="CCC79429.1"/>
    <property type="molecule type" value="Genomic_DNA"/>
</dbReference>
<dbReference type="RefSeq" id="WP_003640872.1">
    <property type="nucleotide sequence ID" value="NC_004567.2"/>
</dbReference>
<dbReference type="RefSeq" id="YP_004889943.1">
    <property type="nucleotide sequence ID" value="NC_004567.2"/>
</dbReference>
<dbReference type="SMR" id="Q88V67"/>
<dbReference type="STRING" id="220668.lp_2216"/>
<dbReference type="EnsemblBacteria" id="CCC79429">
    <property type="protein sequence ID" value="CCC79429"/>
    <property type="gene ID" value="lp_2216"/>
</dbReference>
<dbReference type="GeneID" id="89669470"/>
<dbReference type="KEGG" id="lpl:lp_2216"/>
<dbReference type="PATRIC" id="fig|220668.9.peg.1871"/>
<dbReference type="eggNOG" id="COG0199">
    <property type="taxonomic scope" value="Bacteria"/>
</dbReference>
<dbReference type="HOGENOM" id="CLU_139869_0_0_9"/>
<dbReference type="OrthoDB" id="9810484at2"/>
<dbReference type="PhylomeDB" id="Q88V67"/>
<dbReference type="Proteomes" id="UP000000432">
    <property type="component" value="Chromosome"/>
</dbReference>
<dbReference type="GO" id="GO:0005737">
    <property type="term" value="C:cytoplasm"/>
    <property type="evidence" value="ECO:0007669"/>
    <property type="project" value="UniProtKB-ARBA"/>
</dbReference>
<dbReference type="GO" id="GO:0015935">
    <property type="term" value="C:small ribosomal subunit"/>
    <property type="evidence" value="ECO:0007669"/>
    <property type="project" value="TreeGrafter"/>
</dbReference>
<dbReference type="GO" id="GO:0019843">
    <property type="term" value="F:rRNA binding"/>
    <property type="evidence" value="ECO:0007669"/>
    <property type="project" value="UniProtKB-UniRule"/>
</dbReference>
<dbReference type="GO" id="GO:0003735">
    <property type="term" value="F:structural constituent of ribosome"/>
    <property type="evidence" value="ECO:0007669"/>
    <property type="project" value="InterPro"/>
</dbReference>
<dbReference type="GO" id="GO:0006412">
    <property type="term" value="P:translation"/>
    <property type="evidence" value="ECO:0007669"/>
    <property type="project" value="UniProtKB-UniRule"/>
</dbReference>
<dbReference type="Gene3D" id="4.10.830.10">
    <property type="entry name" value="30s Ribosomal Protein S14, Chain N"/>
    <property type="match status" value="1"/>
</dbReference>
<dbReference type="HAMAP" id="MF_00537">
    <property type="entry name" value="Ribosomal_uS14_1"/>
    <property type="match status" value="1"/>
</dbReference>
<dbReference type="InterPro" id="IPR001209">
    <property type="entry name" value="Ribosomal_uS14"/>
</dbReference>
<dbReference type="InterPro" id="IPR023036">
    <property type="entry name" value="Ribosomal_uS14_bac/plastid"/>
</dbReference>
<dbReference type="InterPro" id="IPR043140">
    <property type="entry name" value="Ribosomal_uS14_sf"/>
</dbReference>
<dbReference type="NCBIfam" id="NF006477">
    <property type="entry name" value="PRK08881.1"/>
    <property type="match status" value="1"/>
</dbReference>
<dbReference type="PANTHER" id="PTHR19836">
    <property type="entry name" value="30S RIBOSOMAL PROTEIN S14"/>
    <property type="match status" value="1"/>
</dbReference>
<dbReference type="PANTHER" id="PTHR19836:SF19">
    <property type="entry name" value="SMALL RIBOSOMAL SUBUNIT PROTEIN US14M"/>
    <property type="match status" value="1"/>
</dbReference>
<dbReference type="Pfam" id="PF00253">
    <property type="entry name" value="Ribosomal_S14"/>
    <property type="match status" value="1"/>
</dbReference>
<dbReference type="SUPFAM" id="SSF57716">
    <property type="entry name" value="Glucocorticoid receptor-like (DNA-binding domain)"/>
    <property type="match status" value="1"/>
</dbReference>
<evidence type="ECO:0000255" key="1">
    <source>
        <dbReference type="HAMAP-Rule" id="MF_00537"/>
    </source>
</evidence>
<evidence type="ECO:0000305" key="2"/>
<feature type="chain" id="PRO_0000269051" description="Small ribosomal subunit protein uS14A">
    <location>
        <begin position="1"/>
        <end position="89"/>
    </location>
</feature>
<proteinExistence type="inferred from homology"/>
<protein>
    <recommendedName>
        <fullName evidence="1">Small ribosomal subunit protein uS14A</fullName>
    </recommendedName>
    <alternativeName>
        <fullName evidence="2">30S ribosomal protein S14</fullName>
    </alternativeName>
</protein>
<comment type="function">
    <text evidence="1">Binds 16S rRNA, required for the assembly of 30S particles and may also be responsible for determining the conformation of the 16S rRNA at the A site.</text>
</comment>
<comment type="subunit">
    <text evidence="1">Part of the 30S ribosomal subunit. Contacts proteins S3 and S10.</text>
</comment>
<comment type="similarity">
    <text evidence="1">Belongs to the universal ribosomal protein uS14 family.</text>
</comment>
<keyword id="KW-1185">Reference proteome</keyword>
<keyword id="KW-0687">Ribonucleoprotein</keyword>
<keyword id="KW-0689">Ribosomal protein</keyword>
<keyword id="KW-0694">RNA-binding</keyword>
<keyword id="KW-0699">rRNA-binding</keyword>
<name>RS14_LACPL</name>
<organism>
    <name type="scientific">Lactiplantibacillus plantarum (strain ATCC BAA-793 / NCIMB 8826 / WCFS1)</name>
    <name type="common">Lactobacillus plantarum</name>
    <dbReference type="NCBI Taxonomy" id="220668"/>
    <lineage>
        <taxon>Bacteria</taxon>
        <taxon>Bacillati</taxon>
        <taxon>Bacillota</taxon>
        <taxon>Bacilli</taxon>
        <taxon>Lactobacillales</taxon>
        <taxon>Lactobacillaceae</taxon>
        <taxon>Lactiplantibacillus</taxon>
    </lineage>
</organism>
<gene>
    <name evidence="1" type="primary">rpsN</name>
    <name type="synonym">rpsN2</name>
    <name type="ordered locus">lp_2216</name>
</gene>
<sequence>MAKKSKIAKEKRIEATVAKYAERRQALKAAGNYTELAKLPRNASPVRIHRRDSLDGRPHAYLRKFGMSRLNFRRLAHAGQIPGVKKASW</sequence>